<dbReference type="EMBL" id="BA000035">
    <property type="protein sequence ID" value="BAC17021.1"/>
    <property type="molecule type" value="Genomic_DNA"/>
</dbReference>
<dbReference type="RefSeq" id="WP_006768478.1">
    <property type="nucleotide sequence ID" value="NC_004369.1"/>
</dbReference>
<dbReference type="SMR" id="Q8FU10"/>
<dbReference type="STRING" id="196164.gene:10740607"/>
<dbReference type="KEGG" id="cef:CE0211"/>
<dbReference type="eggNOG" id="COG0353">
    <property type="taxonomic scope" value="Bacteria"/>
</dbReference>
<dbReference type="HOGENOM" id="CLU_060739_1_0_11"/>
<dbReference type="OrthoDB" id="9802672at2"/>
<dbReference type="Proteomes" id="UP000001409">
    <property type="component" value="Chromosome"/>
</dbReference>
<dbReference type="GO" id="GO:0003677">
    <property type="term" value="F:DNA binding"/>
    <property type="evidence" value="ECO:0007669"/>
    <property type="project" value="UniProtKB-UniRule"/>
</dbReference>
<dbReference type="GO" id="GO:0008270">
    <property type="term" value="F:zinc ion binding"/>
    <property type="evidence" value="ECO:0007669"/>
    <property type="project" value="UniProtKB-KW"/>
</dbReference>
<dbReference type="GO" id="GO:0006310">
    <property type="term" value="P:DNA recombination"/>
    <property type="evidence" value="ECO:0007669"/>
    <property type="project" value="UniProtKB-UniRule"/>
</dbReference>
<dbReference type="GO" id="GO:0006281">
    <property type="term" value="P:DNA repair"/>
    <property type="evidence" value="ECO:0007669"/>
    <property type="project" value="UniProtKB-UniRule"/>
</dbReference>
<dbReference type="CDD" id="cd01025">
    <property type="entry name" value="TOPRIM_recR"/>
    <property type="match status" value="1"/>
</dbReference>
<dbReference type="Gene3D" id="3.40.1360.10">
    <property type="match status" value="1"/>
</dbReference>
<dbReference type="Gene3D" id="6.10.250.240">
    <property type="match status" value="1"/>
</dbReference>
<dbReference type="Gene3D" id="1.10.8.420">
    <property type="entry name" value="RecR Domain 1"/>
    <property type="match status" value="1"/>
</dbReference>
<dbReference type="HAMAP" id="MF_00017">
    <property type="entry name" value="RecR"/>
    <property type="match status" value="1"/>
</dbReference>
<dbReference type="InterPro" id="IPR000093">
    <property type="entry name" value="DNA_Rcmb_RecR"/>
</dbReference>
<dbReference type="InterPro" id="IPR003583">
    <property type="entry name" value="Hlx-hairpin-Hlx_DNA-bd_motif"/>
</dbReference>
<dbReference type="InterPro" id="IPR023627">
    <property type="entry name" value="Rcmb_RecR"/>
</dbReference>
<dbReference type="InterPro" id="IPR015967">
    <property type="entry name" value="Rcmb_RecR_Znf"/>
</dbReference>
<dbReference type="InterPro" id="IPR006171">
    <property type="entry name" value="TOPRIM_dom"/>
</dbReference>
<dbReference type="InterPro" id="IPR034137">
    <property type="entry name" value="TOPRIM_RecR"/>
</dbReference>
<dbReference type="PANTHER" id="PTHR30446">
    <property type="entry name" value="RECOMBINATION PROTEIN RECR"/>
    <property type="match status" value="1"/>
</dbReference>
<dbReference type="PANTHER" id="PTHR30446:SF0">
    <property type="entry name" value="RECOMBINATION PROTEIN RECR"/>
    <property type="match status" value="1"/>
</dbReference>
<dbReference type="Pfam" id="PF21175">
    <property type="entry name" value="RecR_C"/>
    <property type="match status" value="1"/>
</dbReference>
<dbReference type="Pfam" id="PF21176">
    <property type="entry name" value="RecR_HhH"/>
    <property type="match status" value="1"/>
</dbReference>
<dbReference type="Pfam" id="PF02132">
    <property type="entry name" value="RecR_ZnF"/>
    <property type="match status" value="1"/>
</dbReference>
<dbReference type="Pfam" id="PF13662">
    <property type="entry name" value="Toprim_4"/>
    <property type="match status" value="1"/>
</dbReference>
<dbReference type="SMART" id="SM00278">
    <property type="entry name" value="HhH1"/>
    <property type="match status" value="1"/>
</dbReference>
<dbReference type="SMART" id="SM00493">
    <property type="entry name" value="TOPRIM"/>
    <property type="match status" value="1"/>
</dbReference>
<dbReference type="SUPFAM" id="SSF111304">
    <property type="entry name" value="Recombination protein RecR"/>
    <property type="match status" value="1"/>
</dbReference>
<dbReference type="PROSITE" id="PS01300">
    <property type="entry name" value="RECR"/>
    <property type="match status" value="1"/>
</dbReference>
<dbReference type="PROSITE" id="PS50880">
    <property type="entry name" value="TOPRIM"/>
    <property type="match status" value="1"/>
</dbReference>
<accession>Q8FU10</accession>
<keyword id="KW-0227">DNA damage</keyword>
<keyword id="KW-0233">DNA recombination</keyword>
<keyword id="KW-0234">DNA repair</keyword>
<keyword id="KW-0479">Metal-binding</keyword>
<keyword id="KW-1185">Reference proteome</keyword>
<keyword id="KW-0862">Zinc</keyword>
<keyword id="KW-0863">Zinc-finger</keyword>
<name>RECR_COREF</name>
<evidence type="ECO:0000255" key="1">
    <source>
        <dbReference type="HAMAP-Rule" id="MF_00017"/>
    </source>
</evidence>
<sequence length="218" mass="23866">MFEGPLQDLIDELSRLPGVGPKSAQRIAFHLLNVDPDDITRLQDALGAVRDGVRFCRICCNISRDEVCRICNDSGRDRGLICVVEEPKDIQVIERTGEFRGRYHVLGGALDPLANVGPRELTISTLLQRIGGVLDDRELADSTPDTPLLDDKPQIHEVILATDPNTEGEATASYLARLLQDFPDLVVSRLASGMPLGGDLEFVDELTLSRALSGRLPL</sequence>
<comment type="function">
    <text evidence="1">May play a role in DNA repair. It seems to be involved in an RecBC-independent recombinational process of DNA repair. It may act with RecF and RecO.</text>
</comment>
<comment type="similarity">
    <text evidence="1">Belongs to the RecR family.</text>
</comment>
<protein>
    <recommendedName>
        <fullName evidence="1">Recombination protein RecR</fullName>
    </recommendedName>
</protein>
<proteinExistence type="inferred from homology"/>
<organism>
    <name type="scientific">Corynebacterium efficiens (strain DSM 44549 / YS-314 / AJ 12310 / JCM 11189 / NBRC 100395)</name>
    <dbReference type="NCBI Taxonomy" id="196164"/>
    <lineage>
        <taxon>Bacteria</taxon>
        <taxon>Bacillati</taxon>
        <taxon>Actinomycetota</taxon>
        <taxon>Actinomycetes</taxon>
        <taxon>Mycobacteriales</taxon>
        <taxon>Corynebacteriaceae</taxon>
        <taxon>Corynebacterium</taxon>
    </lineage>
</organism>
<reference key="1">
    <citation type="journal article" date="2003" name="Genome Res.">
        <title>Comparative complete genome sequence analysis of the amino acid replacements responsible for the thermostability of Corynebacterium efficiens.</title>
        <authorList>
            <person name="Nishio Y."/>
            <person name="Nakamura Y."/>
            <person name="Kawarabayasi Y."/>
            <person name="Usuda Y."/>
            <person name="Kimura E."/>
            <person name="Sugimoto S."/>
            <person name="Matsui K."/>
            <person name="Yamagishi A."/>
            <person name="Kikuchi H."/>
            <person name="Ikeo K."/>
            <person name="Gojobori T."/>
        </authorList>
    </citation>
    <scope>NUCLEOTIDE SEQUENCE [LARGE SCALE GENOMIC DNA]</scope>
    <source>
        <strain>DSM 44549 / YS-314 / AJ 12310 / JCM 11189 / NBRC 100395</strain>
    </source>
</reference>
<feature type="chain" id="PRO_0000190312" description="Recombination protein RecR">
    <location>
        <begin position="1"/>
        <end position="218"/>
    </location>
</feature>
<feature type="domain" description="Toprim" evidence="1">
    <location>
        <begin position="79"/>
        <end position="195"/>
    </location>
</feature>
<feature type="zinc finger region" description="C4-type" evidence="1">
    <location>
        <begin position="56"/>
        <end position="71"/>
    </location>
</feature>
<gene>
    <name evidence="1" type="primary">recR</name>
    <name type="ordered locus">CE0211</name>
</gene>